<reference key="1">
    <citation type="submission" date="2008-08" db="EMBL/GenBank/DDBJ databases">
        <title>Complete sequence of Vibrio fischeri strain MJ11.</title>
        <authorList>
            <person name="Mandel M.J."/>
            <person name="Stabb E.V."/>
            <person name="Ruby E.G."/>
            <person name="Ferriera S."/>
            <person name="Johnson J."/>
            <person name="Kravitz S."/>
            <person name="Beeson K."/>
            <person name="Sutton G."/>
            <person name="Rogers Y.-H."/>
            <person name="Friedman R."/>
            <person name="Frazier M."/>
            <person name="Venter J.C."/>
        </authorList>
    </citation>
    <scope>NUCLEOTIDE SEQUENCE [LARGE SCALE GENOMIC DNA]</scope>
    <source>
        <strain>MJ11</strain>
    </source>
</reference>
<gene>
    <name evidence="1" type="primary">rpmB</name>
    <name type="ordered locus">VFMJ11_0124</name>
</gene>
<accession>B5FFF7</accession>
<sequence>MSRVCQVTGKRPAVGNNRSHAKNATKRRFLPNLQTHRFWVESEKRFVKLRLTAKGMRIIDKKGIETVLADMRARGENV</sequence>
<name>RL28_ALIFM</name>
<organism>
    <name type="scientific">Aliivibrio fischeri (strain MJ11)</name>
    <name type="common">Vibrio fischeri</name>
    <dbReference type="NCBI Taxonomy" id="388396"/>
    <lineage>
        <taxon>Bacteria</taxon>
        <taxon>Pseudomonadati</taxon>
        <taxon>Pseudomonadota</taxon>
        <taxon>Gammaproteobacteria</taxon>
        <taxon>Vibrionales</taxon>
        <taxon>Vibrionaceae</taxon>
        <taxon>Aliivibrio</taxon>
    </lineage>
</organism>
<dbReference type="EMBL" id="CP001139">
    <property type="protein sequence ID" value="ACH64886.1"/>
    <property type="molecule type" value="Genomic_DNA"/>
</dbReference>
<dbReference type="RefSeq" id="WP_005417050.1">
    <property type="nucleotide sequence ID" value="NC_011184.1"/>
</dbReference>
<dbReference type="SMR" id="B5FFF7"/>
<dbReference type="GeneID" id="54162753"/>
<dbReference type="KEGG" id="vfm:VFMJ11_0124"/>
<dbReference type="HOGENOM" id="CLU_064548_3_1_6"/>
<dbReference type="Proteomes" id="UP000001857">
    <property type="component" value="Chromosome I"/>
</dbReference>
<dbReference type="GO" id="GO:0022625">
    <property type="term" value="C:cytosolic large ribosomal subunit"/>
    <property type="evidence" value="ECO:0007669"/>
    <property type="project" value="TreeGrafter"/>
</dbReference>
<dbReference type="GO" id="GO:0003735">
    <property type="term" value="F:structural constituent of ribosome"/>
    <property type="evidence" value="ECO:0007669"/>
    <property type="project" value="InterPro"/>
</dbReference>
<dbReference type="GO" id="GO:0006412">
    <property type="term" value="P:translation"/>
    <property type="evidence" value="ECO:0007669"/>
    <property type="project" value="UniProtKB-UniRule"/>
</dbReference>
<dbReference type="FunFam" id="2.30.170.40:FF:000001">
    <property type="entry name" value="50S ribosomal protein L28"/>
    <property type="match status" value="1"/>
</dbReference>
<dbReference type="Gene3D" id="2.30.170.40">
    <property type="entry name" value="Ribosomal protein L28/L24"/>
    <property type="match status" value="1"/>
</dbReference>
<dbReference type="HAMAP" id="MF_00373">
    <property type="entry name" value="Ribosomal_bL28"/>
    <property type="match status" value="1"/>
</dbReference>
<dbReference type="InterPro" id="IPR026569">
    <property type="entry name" value="Ribosomal_bL28"/>
</dbReference>
<dbReference type="InterPro" id="IPR034704">
    <property type="entry name" value="Ribosomal_bL28/bL31-like_sf"/>
</dbReference>
<dbReference type="InterPro" id="IPR001383">
    <property type="entry name" value="Ribosomal_bL28_bact-type"/>
</dbReference>
<dbReference type="InterPro" id="IPR037147">
    <property type="entry name" value="Ribosomal_bL28_sf"/>
</dbReference>
<dbReference type="NCBIfam" id="TIGR00009">
    <property type="entry name" value="L28"/>
    <property type="match status" value="1"/>
</dbReference>
<dbReference type="PANTHER" id="PTHR13528">
    <property type="entry name" value="39S RIBOSOMAL PROTEIN L28, MITOCHONDRIAL"/>
    <property type="match status" value="1"/>
</dbReference>
<dbReference type="PANTHER" id="PTHR13528:SF2">
    <property type="entry name" value="LARGE RIBOSOMAL SUBUNIT PROTEIN BL28M"/>
    <property type="match status" value="1"/>
</dbReference>
<dbReference type="Pfam" id="PF00830">
    <property type="entry name" value="Ribosomal_L28"/>
    <property type="match status" value="1"/>
</dbReference>
<dbReference type="SUPFAM" id="SSF143800">
    <property type="entry name" value="L28p-like"/>
    <property type="match status" value="1"/>
</dbReference>
<evidence type="ECO:0000255" key="1">
    <source>
        <dbReference type="HAMAP-Rule" id="MF_00373"/>
    </source>
</evidence>
<evidence type="ECO:0000256" key="2">
    <source>
        <dbReference type="SAM" id="MobiDB-lite"/>
    </source>
</evidence>
<evidence type="ECO:0000305" key="3"/>
<feature type="chain" id="PRO_1000121708" description="Large ribosomal subunit protein bL28">
    <location>
        <begin position="1"/>
        <end position="78"/>
    </location>
</feature>
<feature type="region of interest" description="Disordered" evidence="2">
    <location>
        <begin position="1"/>
        <end position="25"/>
    </location>
</feature>
<proteinExistence type="inferred from homology"/>
<comment type="similarity">
    <text evidence="1">Belongs to the bacterial ribosomal protein bL28 family.</text>
</comment>
<keyword id="KW-0687">Ribonucleoprotein</keyword>
<keyword id="KW-0689">Ribosomal protein</keyword>
<protein>
    <recommendedName>
        <fullName evidence="1">Large ribosomal subunit protein bL28</fullName>
    </recommendedName>
    <alternativeName>
        <fullName evidence="3">50S ribosomal protein L28</fullName>
    </alternativeName>
</protein>